<feature type="chain" id="PRO_0000425555" description="piRNA-mediated silencing protein C19orf84">
    <location>
        <begin position="1"/>
        <end position="186"/>
    </location>
</feature>
<feature type="region of interest" description="Disordered" evidence="2">
    <location>
        <begin position="1"/>
        <end position="42"/>
    </location>
</feature>
<feature type="region of interest" description="Disordered" evidence="2">
    <location>
        <begin position="89"/>
        <end position="186"/>
    </location>
</feature>
<feature type="compositionally biased region" description="Polar residues" evidence="2">
    <location>
        <begin position="13"/>
        <end position="22"/>
    </location>
</feature>
<feature type="compositionally biased region" description="Pro residues" evidence="2">
    <location>
        <begin position="24"/>
        <end position="36"/>
    </location>
</feature>
<feature type="compositionally biased region" description="Basic residues" evidence="2">
    <location>
        <begin position="114"/>
        <end position="126"/>
    </location>
</feature>
<feature type="compositionally biased region" description="Pro residues" evidence="2">
    <location>
        <begin position="145"/>
        <end position="157"/>
    </location>
</feature>
<protein>
    <recommendedName>
        <fullName evidence="3">piRNA-mediated silencing protein C19orf84</fullName>
    </recommendedName>
</protein>
<reference key="1">
    <citation type="journal article" date="2004" name="Nature">
        <title>The DNA sequence and biology of human chromosome 19.</title>
        <authorList>
            <person name="Grimwood J."/>
            <person name="Gordon L.A."/>
            <person name="Olsen A.S."/>
            <person name="Terry A."/>
            <person name="Schmutz J."/>
            <person name="Lamerdin J.E."/>
            <person name="Hellsten U."/>
            <person name="Goodstein D."/>
            <person name="Couronne O."/>
            <person name="Tran-Gyamfi M."/>
            <person name="Aerts A."/>
            <person name="Altherr M."/>
            <person name="Ashworth L."/>
            <person name="Bajorek E."/>
            <person name="Black S."/>
            <person name="Branscomb E."/>
            <person name="Caenepeel S."/>
            <person name="Carrano A.V."/>
            <person name="Caoile C."/>
            <person name="Chan Y.M."/>
            <person name="Christensen M."/>
            <person name="Cleland C.A."/>
            <person name="Copeland A."/>
            <person name="Dalin E."/>
            <person name="Dehal P."/>
            <person name="Denys M."/>
            <person name="Detter J.C."/>
            <person name="Escobar J."/>
            <person name="Flowers D."/>
            <person name="Fotopulos D."/>
            <person name="Garcia C."/>
            <person name="Georgescu A.M."/>
            <person name="Glavina T."/>
            <person name="Gomez M."/>
            <person name="Gonzales E."/>
            <person name="Groza M."/>
            <person name="Hammon N."/>
            <person name="Hawkins T."/>
            <person name="Haydu L."/>
            <person name="Ho I."/>
            <person name="Huang W."/>
            <person name="Israni S."/>
            <person name="Jett J."/>
            <person name="Kadner K."/>
            <person name="Kimball H."/>
            <person name="Kobayashi A."/>
            <person name="Larionov V."/>
            <person name="Leem S.-H."/>
            <person name="Lopez F."/>
            <person name="Lou Y."/>
            <person name="Lowry S."/>
            <person name="Malfatti S."/>
            <person name="Martinez D."/>
            <person name="McCready P.M."/>
            <person name="Medina C."/>
            <person name="Morgan J."/>
            <person name="Nelson K."/>
            <person name="Nolan M."/>
            <person name="Ovcharenko I."/>
            <person name="Pitluck S."/>
            <person name="Pollard M."/>
            <person name="Popkie A.P."/>
            <person name="Predki P."/>
            <person name="Quan G."/>
            <person name="Ramirez L."/>
            <person name="Rash S."/>
            <person name="Retterer J."/>
            <person name="Rodriguez A."/>
            <person name="Rogers S."/>
            <person name="Salamov A."/>
            <person name="Salazar A."/>
            <person name="She X."/>
            <person name="Smith D."/>
            <person name="Slezak T."/>
            <person name="Solovyev V."/>
            <person name="Thayer N."/>
            <person name="Tice H."/>
            <person name="Tsai M."/>
            <person name="Ustaszewska A."/>
            <person name="Vo N."/>
            <person name="Wagner M."/>
            <person name="Wheeler J."/>
            <person name="Wu K."/>
            <person name="Xie G."/>
            <person name="Yang J."/>
            <person name="Dubchak I."/>
            <person name="Furey T.S."/>
            <person name="DeJong P."/>
            <person name="Dickson M."/>
            <person name="Gordon D."/>
            <person name="Eichler E.E."/>
            <person name="Pennacchio L.A."/>
            <person name="Richardson P."/>
            <person name="Stubbs L."/>
            <person name="Rokhsar D.S."/>
            <person name="Myers R.M."/>
            <person name="Rubin E.M."/>
            <person name="Lucas S.M."/>
        </authorList>
    </citation>
    <scope>NUCLEOTIDE SEQUENCE [LARGE SCALE GENOMIC DNA]</scope>
</reference>
<gene>
    <name evidence="4" type="primary">C19orf84</name>
</gene>
<keyword id="KW-0539">Nucleus</keyword>
<keyword id="KW-1267">Proteomics identification</keyword>
<keyword id="KW-1185">Reference proteome</keyword>
<evidence type="ECO:0000250" key="1">
    <source>
        <dbReference type="UniProtKB" id="H3BKT1"/>
    </source>
</evidence>
<evidence type="ECO:0000256" key="2">
    <source>
        <dbReference type="SAM" id="MobiDB-lite"/>
    </source>
</evidence>
<evidence type="ECO:0000305" key="3"/>
<evidence type="ECO:0000312" key="4">
    <source>
        <dbReference type="HGNC" id="HGNC:27112"/>
    </source>
</evidence>
<dbReference type="EMBL" id="AC008750">
    <property type="status" value="NOT_ANNOTATED_CDS"/>
    <property type="molecule type" value="Genomic_DNA"/>
</dbReference>
<dbReference type="CCDS" id="CCDS58676.1"/>
<dbReference type="RefSeq" id="NP_001180552.1">
    <property type="nucleotide sequence ID" value="NM_001193623.2"/>
</dbReference>
<dbReference type="FunCoup" id="I3L1E1">
    <property type="interactions" value="1"/>
</dbReference>
<dbReference type="BioMuta" id="C19orf84"/>
<dbReference type="jPOST" id="I3L1E1"/>
<dbReference type="MassIVE" id="I3L1E1"/>
<dbReference type="PaxDb" id="9606-ENSP00000458772"/>
<dbReference type="PeptideAtlas" id="I3L1E1"/>
<dbReference type="Antibodypedia" id="69415">
    <property type="antibodies" value="43 antibodies from 8 providers"/>
</dbReference>
<dbReference type="DNASU" id="147646"/>
<dbReference type="Ensembl" id="ENST00000574814.2">
    <property type="protein sequence ID" value="ENSP00000458772.1"/>
    <property type="gene ID" value="ENSG00000262874.2"/>
</dbReference>
<dbReference type="GeneID" id="147646"/>
<dbReference type="KEGG" id="hsa:147646"/>
<dbReference type="MANE-Select" id="ENST00000574814.2">
    <property type="protein sequence ID" value="ENSP00000458772.1"/>
    <property type="RefSeq nucleotide sequence ID" value="NM_001193623.2"/>
    <property type="RefSeq protein sequence ID" value="NP_001180552.1"/>
</dbReference>
<dbReference type="UCSC" id="uc002pwn.3">
    <property type="organism name" value="human"/>
</dbReference>
<dbReference type="AGR" id="HGNC:27112"/>
<dbReference type="CTD" id="147646"/>
<dbReference type="GeneCards" id="C19orf84"/>
<dbReference type="HGNC" id="HGNC:27112">
    <property type="gene designation" value="C19orf84"/>
</dbReference>
<dbReference type="HPA" id="ENSG00000262874">
    <property type="expression patterns" value="Tissue enriched (testis)"/>
</dbReference>
<dbReference type="neXtProt" id="NX_I3L1E1"/>
<dbReference type="OpenTargets" id="ENSG00000262874"/>
<dbReference type="VEuPathDB" id="HostDB:ENSG00000262874"/>
<dbReference type="eggNOG" id="ENOG502T3QQ">
    <property type="taxonomic scope" value="Eukaryota"/>
</dbReference>
<dbReference type="GeneTree" id="ENSGT00660000097488"/>
<dbReference type="HOGENOM" id="CLU_1453944_0_0_1"/>
<dbReference type="InParanoid" id="I3L1E1"/>
<dbReference type="OMA" id="PSCPCVP"/>
<dbReference type="OrthoDB" id="9450965at2759"/>
<dbReference type="PAN-GO" id="I3L1E1">
    <property type="GO annotations" value="0 GO annotations based on evolutionary models"/>
</dbReference>
<dbReference type="PathwayCommons" id="I3L1E1"/>
<dbReference type="Reactome" id="R-HSA-9845323">
    <property type="pathway name" value="Regulation of endogenous retroelements by Piwi-interacting RNAs (piRNAs)"/>
</dbReference>
<dbReference type="BioGRID-ORCS" id="147646">
    <property type="hits" value="13 hits in 1031 CRISPR screens"/>
</dbReference>
<dbReference type="GenomeRNAi" id="147646"/>
<dbReference type="Pharos" id="I3L1E1">
    <property type="development level" value="Tdark"/>
</dbReference>
<dbReference type="PRO" id="PR:I3L1E1"/>
<dbReference type="Proteomes" id="UP000005640">
    <property type="component" value="Chromosome 19"/>
</dbReference>
<dbReference type="RNAct" id="I3L1E1">
    <property type="molecule type" value="protein"/>
</dbReference>
<dbReference type="Bgee" id="ENSG00000262874">
    <property type="expression patterns" value="Expressed in primordial germ cell in gonad and 69 other cell types or tissues"/>
</dbReference>
<dbReference type="ExpressionAtlas" id="I3L1E1">
    <property type="expression patterns" value="baseline and differential"/>
</dbReference>
<dbReference type="GO" id="GO:0005654">
    <property type="term" value="C:nucleoplasm"/>
    <property type="evidence" value="ECO:0000250"/>
    <property type="project" value="UniProtKB"/>
</dbReference>
<dbReference type="GO" id="GO:0141196">
    <property type="term" value="P:transposable element silencing by piRNA-mediated DNA methylation"/>
    <property type="evidence" value="ECO:0007669"/>
    <property type="project" value="Ensembl"/>
</dbReference>
<dbReference type="InterPro" id="IPR040606">
    <property type="entry name" value="C19orf84"/>
</dbReference>
<dbReference type="Pfam" id="PF17703">
    <property type="entry name" value="C19orf84"/>
    <property type="match status" value="1"/>
</dbReference>
<accession>I3L1E1</accession>
<proteinExistence type="evidence at protein level"/>
<comment type="function">
    <text evidence="1">Protein adapter involved in piRNA-directed transposon methylation by connecting PIWIL4-piRNA and DNA methylation machineries. The PIWIL4-piRNA pathway plays a central role during spermatogenesis by directing transposon DNA methylation and silencing, thereby preventing their mobilization, which is essential for the germline integrity.</text>
</comment>
<comment type="subunit">
    <text evidence="1">Interacts with SPOCD1.</text>
</comment>
<comment type="subcellular location">
    <subcellularLocation>
        <location evidence="1">Nucleus</location>
        <location evidence="1">Nucleoplasm</location>
    </subcellularLocation>
</comment>
<sequence>MEQPKDGAGPEGNNLSLPSSGTEPWPPAPLPAPPPLLLNSTDPTHLGLPESVASVTVPIRLDTLSCLLHSALLGAYTFQQALPSCPCCSQAGHSQPGAVRRPPRGRGGWEVRHRPGWGRGLHRRGLGRAEQPERGRAGGPGAGPRTPPMTLPSPPTLPAQDGKKEARGPEPPLETPLAAEDWETEY</sequence>
<organism>
    <name type="scientific">Homo sapiens</name>
    <name type="common">Human</name>
    <dbReference type="NCBI Taxonomy" id="9606"/>
    <lineage>
        <taxon>Eukaryota</taxon>
        <taxon>Metazoa</taxon>
        <taxon>Chordata</taxon>
        <taxon>Craniata</taxon>
        <taxon>Vertebrata</taxon>
        <taxon>Euteleostomi</taxon>
        <taxon>Mammalia</taxon>
        <taxon>Eutheria</taxon>
        <taxon>Euarchontoglires</taxon>
        <taxon>Primates</taxon>
        <taxon>Haplorrhini</taxon>
        <taxon>Catarrhini</taxon>
        <taxon>Hominidae</taxon>
        <taxon>Homo</taxon>
    </lineage>
</organism>
<name>CS084_HUMAN</name>